<proteinExistence type="inferred from homology"/>
<comment type="function">
    <text evidence="1">PsaA and PsaB bind P700, the primary electron donor of photosystem I (PSI), as well as the electron acceptors A0, A1 and FX. PSI is a plastocyanin/cytochrome c6-ferredoxin oxidoreductase, converting photonic excitation into a charge separation, which transfers an electron from the donor P700 chlorophyll pair to the spectroscopically characterized acceptors A0, A1, FX, FA and FB in turn. Oxidized P700 is reduced on the lumenal side of the thylakoid membrane by plastocyanin or cytochrome c6.</text>
</comment>
<comment type="catalytic activity">
    <reaction evidence="1">
        <text>reduced [plastocyanin] + hnu + oxidized [2Fe-2S]-[ferredoxin] = oxidized [plastocyanin] + reduced [2Fe-2S]-[ferredoxin]</text>
        <dbReference type="Rhea" id="RHEA:30407"/>
        <dbReference type="Rhea" id="RHEA-COMP:10000"/>
        <dbReference type="Rhea" id="RHEA-COMP:10001"/>
        <dbReference type="Rhea" id="RHEA-COMP:10039"/>
        <dbReference type="Rhea" id="RHEA-COMP:10040"/>
        <dbReference type="ChEBI" id="CHEBI:29036"/>
        <dbReference type="ChEBI" id="CHEBI:30212"/>
        <dbReference type="ChEBI" id="CHEBI:33737"/>
        <dbReference type="ChEBI" id="CHEBI:33738"/>
        <dbReference type="ChEBI" id="CHEBI:49552"/>
        <dbReference type="EC" id="1.97.1.12"/>
    </reaction>
</comment>
<comment type="cofactor">
    <text evidence="1">PSI electron transfer chain: 5 divinyl chlorophyll a, 1 divinyl chlorophyll a', 2 phylloquinones and 3 4Fe-4S clusters. PSI core antenna: 90 divinyl chlorophyll a, 22 carotenoids, 3 phospholipids and 1 galactolipid. P700 is a divinyl chlorophyll a/divinyl chlorophyll a' dimer, A0 is one or more divinyl chlorophyll a, A1 is one or both phylloquinones and FX is a shared 4Fe-4S iron-sulfur center.</text>
</comment>
<comment type="subunit">
    <text evidence="1">The PsaA/B heterodimer binds the P700 divinyl chlorophyll special pair and subsequent electron acceptors. PSI consists of a core antenna complex that captures photons, and an electron transfer chain that converts photonic excitation into a charge separation. The cyanobacterial PSI reaction center is composed of one copy each of PsaA,B,C,D,E,F,I,J,K,L,M and X, and forms trimeric complexes.</text>
</comment>
<comment type="subcellular location">
    <subcellularLocation>
        <location evidence="1">Cellular thylakoid membrane</location>
        <topology evidence="1">Multi-pass membrane protein</topology>
    </subcellularLocation>
</comment>
<comment type="similarity">
    <text evidence="1">Belongs to the PsaA/PsaB family.</text>
</comment>
<gene>
    <name evidence="1" type="primary">psaA</name>
    <name type="ordered locus">NATL1_19571</name>
</gene>
<dbReference type="EC" id="1.97.1.12" evidence="1"/>
<dbReference type="EMBL" id="CP000553">
    <property type="protein sequence ID" value="ABM76513.1"/>
    <property type="molecule type" value="Genomic_DNA"/>
</dbReference>
<dbReference type="RefSeq" id="WP_011824482.1">
    <property type="nucleotide sequence ID" value="NC_008819.1"/>
</dbReference>
<dbReference type="SMR" id="A2C4V3"/>
<dbReference type="KEGG" id="pme:NATL1_19571"/>
<dbReference type="eggNOG" id="COG2885">
    <property type="taxonomic scope" value="Bacteria"/>
</dbReference>
<dbReference type="HOGENOM" id="CLU_016126_1_0_3"/>
<dbReference type="Proteomes" id="UP000002592">
    <property type="component" value="Chromosome"/>
</dbReference>
<dbReference type="GO" id="GO:0009522">
    <property type="term" value="C:photosystem I"/>
    <property type="evidence" value="ECO:0007669"/>
    <property type="project" value="UniProtKB-KW"/>
</dbReference>
<dbReference type="GO" id="GO:0031676">
    <property type="term" value="C:plasma membrane-derived thylakoid membrane"/>
    <property type="evidence" value="ECO:0007669"/>
    <property type="project" value="UniProtKB-SubCell"/>
</dbReference>
<dbReference type="GO" id="GO:0051539">
    <property type="term" value="F:4 iron, 4 sulfur cluster binding"/>
    <property type="evidence" value="ECO:0007669"/>
    <property type="project" value="UniProtKB-KW"/>
</dbReference>
<dbReference type="GO" id="GO:0016168">
    <property type="term" value="F:chlorophyll binding"/>
    <property type="evidence" value="ECO:0007669"/>
    <property type="project" value="UniProtKB-KW"/>
</dbReference>
<dbReference type="GO" id="GO:0009055">
    <property type="term" value="F:electron transfer activity"/>
    <property type="evidence" value="ECO:0007669"/>
    <property type="project" value="UniProtKB-UniRule"/>
</dbReference>
<dbReference type="GO" id="GO:0000287">
    <property type="term" value="F:magnesium ion binding"/>
    <property type="evidence" value="ECO:0007669"/>
    <property type="project" value="UniProtKB-UniRule"/>
</dbReference>
<dbReference type="GO" id="GO:0016491">
    <property type="term" value="F:oxidoreductase activity"/>
    <property type="evidence" value="ECO:0007669"/>
    <property type="project" value="UniProtKB-KW"/>
</dbReference>
<dbReference type="GO" id="GO:0015979">
    <property type="term" value="P:photosynthesis"/>
    <property type="evidence" value="ECO:0007669"/>
    <property type="project" value="UniProtKB-UniRule"/>
</dbReference>
<dbReference type="Gene3D" id="1.20.1130.10">
    <property type="entry name" value="Photosystem I PsaA/PsaB"/>
    <property type="match status" value="1"/>
</dbReference>
<dbReference type="HAMAP" id="MF_00458">
    <property type="entry name" value="PSI_PsaA"/>
    <property type="match status" value="1"/>
</dbReference>
<dbReference type="InterPro" id="IPR006243">
    <property type="entry name" value="PSI_PsaA"/>
</dbReference>
<dbReference type="InterPro" id="IPR001280">
    <property type="entry name" value="PSI_PsaA/B"/>
</dbReference>
<dbReference type="InterPro" id="IPR020586">
    <property type="entry name" value="PSI_PsaA/B_CS"/>
</dbReference>
<dbReference type="InterPro" id="IPR036408">
    <property type="entry name" value="PSI_PsaA/B_sf"/>
</dbReference>
<dbReference type="NCBIfam" id="TIGR01335">
    <property type="entry name" value="psaA"/>
    <property type="match status" value="1"/>
</dbReference>
<dbReference type="PANTHER" id="PTHR30128">
    <property type="entry name" value="OUTER MEMBRANE PROTEIN, OMPA-RELATED"/>
    <property type="match status" value="1"/>
</dbReference>
<dbReference type="PANTHER" id="PTHR30128:SF19">
    <property type="entry name" value="PHOTOSYSTEM I P700 CHLOROPHYLL A APOPROTEIN A1-RELATED"/>
    <property type="match status" value="1"/>
</dbReference>
<dbReference type="Pfam" id="PF00223">
    <property type="entry name" value="PsaA_PsaB"/>
    <property type="match status" value="1"/>
</dbReference>
<dbReference type="PIRSF" id="PIRSF002905">
    <property type="entry name" value="PSI_A"/>
    <property type="match status" value="1"/>
</dbReference>
<dbReference type="PRINTS" id="PR00257">
    <property type="entry name" value="PHOTSYSPSAAB"/>
</dbReference>
<dbReference type="SUPFAM" id="SSF81558">
    <property type="entry name" value="Photosystem I subunits PsaA/PsaB"/>
    <property type="match status" value="1"/>
</dbReference>
<dbReference type="PROSITE" id="PS00419">
    <property type="entry name" value="PHOTOSYSTEM_I_PSAAB"/>
    <property type="match status" value="1"/>
</dbReference>
<sequence length="768" mass="84390">MTISPPEKEQKKEPVLDKPIETDAIPVDFSKLDKPGFWSKSLAKGPKTTTWIWNLHADAHDFDTHVGDLQETSRKVFSAHFGHLAVIFIWMSAAFFHGARFSNYSGWLSDPTHVKPGAQVVWPIVGQEMLNADLGGNYHGIQITSGIFQMWRGWGITNETELMALAIGALLMAAIMLHGGIYHYHKAAPKLDWFRNLESMLNHHIAGLVGLGSIAWAGHCIHIGAPTAALMDAIDAGKPLIIDGIPIASIADMPLPHELCNPAIASQIFPGLAGRTVENFFTTNWWAFSDFLTFKGGLNPVTGSLWMTDISHHHLAFGVLAVLGGHLYRTMFGIGHSLKEILDNHAGDPILFPAPNGHKGIYEFLANSWHAQLGLNLAMIGSLSIIISHHMYAMPPYPYLSIDYPTVLGLFTHHMWIGGLFIVGAAAHAGIAMIRDYDPAVHIDNVLDRILKARDALISHLNWACMFLGFHSFGLYIHNDVMRALGRPADMFSDTGIQLQPVFAQWIQNIHNSAAGSTTLAGANVNLQPGLVSEVFNGSVSQVGGKIGIAPIPLGTADFMIHHIHAFTIHVTLLILLKGVLFARSSRLIPDKANLGFRFPCDGPGRGGTCQVSSWDHVFLGLFWMYNGLSVVIFHFSWKMQSDVWGLTGGNFAQSSITINGWLRDFLWAQSSQVLTSYGQPISMYGLMFLGAHFVWAFSLMFLFSGRGYWQELFESIIWAHNKLNLAPTIQPRALSITQGRAVGAAHFLLGGIATTWAFFHARLIGLG</sequence>
<reference key="1">
    <citation type="journal article" date="2007" name="PLoS Genet.">
        <title>Patterns and implications of gene gain and loss in the evolution of Prochlorococcus.</title>
        <authorList>
            <person name="Kettler G.C."/>
            <person name="Martiny A.C."/>
            <person name="Huang K."/>
            <person name="Zucker J."/>
            <person name="Coleman M.L."/>
            <person name="Rodrigue S."/>
            <person name="Chen F."/>
            <person name="Lapidus A."/>
            <person name="Ferriera S."/>
            <person name="Johnson J."/>
            <person name="Steglich C."/>
            <person name="Church G.M."/>
            <person name="Richardson P."/>
            <person name="Chisholm S.W."/>
        </authorList>
    </citation>
    <scope>NUCLEOTIDE SEQUENCE [LARGE SCALE GENOMIC DNA]</scope>
    <source>
        <strain>NATL1A</strain>
    </source>
</reference>
<organism>
    <name type="scientific">Prochlorococcus marinus (strain NATL1A)</name>
    <dbReference type="NCBI Taxonomy" id="167555"/>
    <lineage>
        <taxon>Bacteria</taxon>
        <taxon>Bacillati</taxon>
        <taxon>Cyanobacteriota</taxon>
        <taxon>Cyanophyceae</taxon>
        <taxon>Synechococcales</taxon>
        <taxon>Prochlorococcaceae</taxon>
        <taxon>Prochlorococcus</taxon>
    </lineage>
</organism>
<keyword id="KW-0004">4Fe-4S</keyword>
<keyword id="KW-0148">Chlorophyll</keyword>
<keyword id="KW-0157">Chromophore</keyword>
<keyword id="KW-0249">Electron transport</keyword>
<keyword id="KW-0408">Iron</keyword>
<keyword id="KW-0411">Iron-sulfur</keyword>
<keyword id="KW-0460">Magnesium</keyword>
<keyword id="KW-0472">Membrane</keyword>
<keyword id="KW-0479">Metal-binding</keyword>
<keyword id="KW-0560">Oxidoreductase</keyword>
<keyword id="KW-0602">Photosynthesis</keyword>
<keyword id="KW-0603">Photosystem I</keyword>
<keyword id="KW-0793">Thylakoid</keyword>
<keyword id="KW-0812">Transmembrane</keyword>
<keyword id="KW-1133">Transmembrane helix</keyword>
<keyword id="KW-0813">Transport</keyword>
<accession>A2C4V3</accession>
<evidence type="ECO:0000255" key="1">
    <source>
        <dbReference type="HAMAP-Rule" id="MF_00458"/>
    </source>
</evidence>
<protein>
    <recommendedName>
        <fullName evidence="1">Photosystem I P700 chlorophyll a apoprotein A1</fullName>
        <ecNumber evidence="1">1.97.1.12</ecNumber>
    </recommendedName>
    <alternativeName>
        <fullName evidence="1">PsaA</fullName>
    </alternativeName>
</protein>
<name>PSAA_PROM1</name>
<feature type="chain" id="PRO_0000294204" description="Photosystem I P700 chlorophyll a apoprotein A1">
    <location>
        <begin position="1"/>
        <end position="768"/>
    </location>
</feature>
<feature type="transmembrane region" description="Helical; Name=I" evidence="1">
    <location>
        <begin position="76"/>
        <end position="99"/>
    </location>
</feature>
<feature type="transmembrane region" description="Helical; Name=II" evidence="1">
    <location>
        <begin position="162"/>
        <end position="185"/>
    </location>
</feature>
<feature type="transmembrane region" description="Helical; Name=III" evidence="1">
    <location>
        <begin position="201"/>
        <end position="225"/>
    </location>
</feature>
<feature type="transmembrane region" description="Helical; Name=IV" evidence="1">
    <location>
        <begin position="310"/>
        <end position="328"/>
    </location>
</feature>
<feature type="transmembrane region" description="Helical; Name=V" evidence="1">
    <location>
        <begin position="369"/>
        <end position="392"/>
    </location>
</feature>
<feature type="transmembrane region" description="Helical; Name=VI" evidence="1">
    <location>
        <begin position="408"/>
        <end position="434"/>
    </location>
</feature>
<feature type="transmembrane region" description="Helical; Name=VII" evidence="1">
    <location>
        <begin position="456"/>
        <end position="478"/>
    </location>
</feature>
<feature type="transmembrane region" description="Helical; Name=VIII" evidence="1">
    <location>
        <begin position="559"/>
        <end position="577"/>
    </location>
</feature>
<feature type="transmembrane region" description="Helical; Name=IX" evidence="1">
    <location>
        <begin position="617"/>
        <end position="638"/>
    </location>
</feature>
<feature type="transmembrane region" description="Helical; Name=X" evidence="1">
    <location>
        <begin position="682"/>
        <end position="704"/>
    </location>
</feature>
<feature type="transmembrane region" description="Helical; Name=XI" evidence="1">
    <location>
        <begin position="742"/>
        <end position="762"/>
    </location>
</feature>
<feature type="binding site" evidence="1">
    <location>
        <position position="601"/>
    </location>
    <ligand>
        <name>[4Fe-4S] cluster</name>
        <dbReference type="ChEBI" id="CHEBI:49883"/>
        <note>ligand shared between dimeric partners</note>
    </ligand>
</feature>
<feature type="binding site" evidence="1">
    <location>
        <position position="610"/>
    </location>
    <ligand>
        <name>[4Fe-4S] cluster</name>
        <dbReference type="ChEBI" id="CHEBI:49883"/>
        <note>ligand shared between dimeric partners</note>
    </ligand>
</feature>
<feature type="binding site" description="axial binding residue" evidence="1">
    <location>
        <position position="693"/>
    </location>
    <ligand>
        <name>divinylchlorophyll a'</name>
        <dbReference type="ChEBI" id="CHEBI:189420"/>
        <label>A1</label>
    </ligand>
    <ligandPart>
        <name>Mg</name>
        <dbReference type="ChEBI" id="CHEBI:25107"/>
    </ligandPart>
</feature>
<feature type="binding site" description="axial binding residue" evidence="1">
    <location>
        <position position="701"/>
    </location>
    <ligand>
        <name>divinyl chlorophyll a</name>
        <dbReference type="ChEBI" id="CHEBI:73095"/>
        <label>A3</label>
    </ligand>
    <ligandPart>
        <name>Mg</name>
        <dbReference type="ChEBI" id="CHEBI:25107"/>
    </ligandPart>
</feature>
<feature type="binding site" evidence="1">
    <location>
        <position position="709"/>
    </location>
    <ligand>
        <name>divinyl chlorophyll a</name>
        <dbReference type="ChEBI" id="CHEBI:73095"/>
        <label>A3</label>
    </ligand>
</feature>
<feature type="binding site" evidence="1">
    <location>
        <position position="710"/>
    </location>
    <ligand>
        <name>phylloquinone</name>
        <dbReference type="ChEBI" id="CHEBI:18067"/>
        <label>A</label>
    </ligand>
</feature>